<proteinExistence type="inferred from homology"/>
<feature type="chain" id="PRO_0000029687" description="Phosphatidylserine decarboxylase beta chain" evidence="1">
    <location>
        <begin position="1"/>
        <end position="253"/>
    </location>
</feature>
<feature type="chain" id="PRO_0000029688" description="Phosphatidylserine decarboxylase alpha chain" evidence="1">
    <location>
        <begin position="254"/>
        <end position="289"/>
    </location>
</feature>
<feature type="active site" description="Charge relay system; for autoendoproteolytic cleavage activity" evidence="1">
    <location>
        <position position="92"/>
    </location>
</feature>
<feature type="active site" description="Charge relay system; for autoendoproteolytic cleavage activity" evidence="1">
    <location>
        <position position="149"/>
    </location>
</feature>
<feature type="active site" description="Charge relay system; for autoendoproteolytic cleavage activity" evidence="1">
    <location>
        <position position="254"/>
    </location>
</feature>
<feature type="active site" description="Schiff-base intermediate with substrate; via pyruvic acid; for decarboxylase activity" evidence="1">
    <location>
        <position position="254"/>
    </location>
</feature>
<feature type="site" description="Cleavage (non-hydrolytic); by autocatalysis" evidence="1">
    <location>
        <begin position="253"/>
        <end position="254"/>
    </location>
</feature>
<feature type="modified residue" description="Pyruvic acid (Ser); by autocatalysis" evidence="1">
    <location>
        <position position="254"/>
    </location>
</feature>
<evidence type="ECO:0000255" key="1">
    <source>
        <dbReference type="HAMAP-Rule" id="MF_00662"/>
    </source>
</evidence>
<dbReference type="EC" id="4.1.1.65" evidence="1"/>
<dbReference type="EMBL" id="AE004091">
    <property type="protein sequence ID" value="AAG08342.1"/>
    <property type="molecule type" value="Genomic_DNA"/>
</dbReference>
<dbReference type="PIR" id="C83027">
    <property type="entry name" value="C83027"/>
</dbReference>
<dbReference type="RefSeq" id="NP_253644.1">
    <property type="nucleotide sequence ID" value="NC_002516.2"/>
</dbReference>
<dbReference type="SMR" id="Q9HUK8"/>
<dbReference type="FunCoup" id="Q9HUK8">
    <property type="interactions" value="406"/>
</dbReference>
<dbReference type="STRING" id="208964.PA4957"/>
<dbReference type="PaxDb" id="208964-PA4957"/>
<dbReference type="DNASU" id="879173"/>
<dbReference type="GeneID" id="879173"/>
<dbReference type="KEGG" id="pae:PA4957"/>
<dbReference type="PATRIC" id="fig|208964.12.peg.5190"/>
<dbReference type="PseudoCAP" id="PA4957"/>
<dbReference type="HOGENOM" id="CLU_029061_4_1_6"/>
<dbReference type="InParanoid" id="Q9HUK8"/>
<dbReference type="OrthoDB" id="9802030at2"/>
<dbReference type="PhylomeDB" id="Q9HUK8"/>
<dbReference type="BioCyc" id="PAER208964:G1FZ6-5073-MONOMER"/>
<dbReference type="UniPathway" id="UPA00558">
    <property type="reaction ID" value="UER00616"/>
</dbReference>
<dbReference type="Proteomes" id="UP000002438">
    <property type="component" value="Chromosome"/>
</dbReference>
<dbReference type="GO" id="GO:0005886">
    <property type="term" value="C:plasma membrane"/>
    <property type="evidence" value="ECO:0007669"/>
    <property type="project" value="UniProtKB-SubCell"/>
</dbReference>
<dbReference type="GO" id="GO:0004609">
    <property type="term" value="F:phosphatidylserine decarboxylase activity"/>
    <property type="evidence" value="ECO:0000318"/>
    <property type="project" value="GO_Central"/>
</dbReference>
<dbReference type="GO" id="GO:0006646">
    <property type="term" value="P:phosphatidylethanolamine biosynthetic process"/>
    <property type="evidence" value="ECO:0000318"/>
    <property type="project" value="GO_Central"/>
</dbReference>
<dbReference type="HAMAP" id="MF_00662">
    <property type="entry name" value="PS_decarb_PSD_B_type1"/>
    <property type="match status" value="1"/>
</dbReference>
<dbReference type="InterPro" id="IPR003817">
    <property type="entry name" value="PS_Dcarbxylase"/>
</dbReference>
<dbReference type="InterPro" id="IPR033177">
    <property type="entry name" value="PSD-B"/>
</dbReference>
<dbReference type="InterPro" id="IPR033178">
    <property type="entry name" value="PSD_type1_pro"/>
</dbReference>
<dbReference type="NCBIfam" id="TIGR00163">
    <property type="entry name" value="PS_decarb"/>
    <property type="match status" value="1"/>
</dbReference>
<dbReference type="PANTHER" id="PTHR10067">
    <property type="entry name" value="PHOSPHATIDYLSERINE DECARBOXYLASE"/>
    <property type="match status" value="1"/>
</dbReference>
<dbReference type="PANTHER" id="PTHR10067:SF6">
    <property type="entry name" value="PHOSPHATIDYLSERINE DECARBOXYLASE PROENZYME, MITOCHONDRIAL"/>
    <property type="match status" value="1"/>
</dbReference>
<dbReference type="Pfam" id="PF02666">
    <property type="entry name" value="PS_Dcarbxylase"/>
    <property type="match status" value="1"/>
</dbReference>
<keyword id="KW-1003">Cell membrane</keyword>
<keyword id="KW-0210">Decarboxylase</keyword>
<keyword id="KW-0444">Lipid biosynthesis</keyword>
<keyword id="KW-0443">Lipid metabolism</keyword>
<keyword id="KW-0456">Lyase</keyword>
<keyword id="KW-0472">Membrane</keyword>
<keyword id="KW-0594">Phospholipid biosynthesis</keyword>
<keyword id="KW-1208">Phospholipid metabolism</keyword>
<keyword id="KW-0670">Pyruvate</keyword>
<keyword id="KW-1185">Reference proteome</keyword>
<keyword id="KW-0865">Zymogen</keyword>
<comment type="function">
    <text evidence="1">Catalyzes the formation of phosphatidylethanolamine (PtdEtn) from phosphatidylserine (PtdSer).</text>
</comment>
<comment type="catalytic activity">
    <reaction evidence="1">
        <text>a 1,2-diacyl-sn-glycero-3-phospho-L-serine + H(+) = a 1,2-diacyl-sn-glycero-3-phosphoethanolamine + CO2</text>
        <dbReference type="Rhea" id="RHEA:20828"/>
        <dbReference type="ChEBI" id="CHEBI:15378"/>
        <dbReference type="ChEBI" id="CHEBI:16526"/>
        <dbReference type="ChEBI" id="CHEBI:57262"/>
        <dbReference type="ChEBI" id="CHEBI:64612"/>
        <dbReference type="EC" id="4.1.1.65"/>
    </reaction>
</comment>
<comment type="cofactor">
    <cofactor evidence="1">
        <name>pyruvate</name>
        <dbReference type="ChEBI" id="CHEBI:15361"/>
    </cofactor>
    <text evidence="1">Binds 1 pyruvoyl group covalently per subunit.</text>
</comment>
<comment type="pathway">
    <text evidence="1">Phospholipid metabolism; phosphatidylethanolamine biosynthesis; phosphatidylethanolamine from CDP-diacylglycerol: step 2/2.</text>
</comment>
<comment type="subunit">
    <text evidence="1">Heterodimer of a large membrane-associated beta subunit and a small pyruvoyl-containing alpha subunit.</text>
</comment>
<comment type="subcellular location">
    <subcellularLocation>
        <location evidence="1">Cell membrane</location>
        <topology evidence="1">Peripheral membrane protein</topology>
    </subcellularLocation>
</comment>
<comment type="PTM">
    <text evidence="1">Is synthesized initially as an inactive proenzyme. Formation of the active enzyme involves a self-maturation process in which the active site pyruvoyl group is generated from an internal serine residue via an autocatalytic post-translational modification. Two non-identical subunits are generated from the proenzyme in this reaction, and the pyruvate is formed at the N-terminus of the alpha chain, which is derived from the carboxyl end of the proenzyme. The autoendoproteolytic cleavage occurs by a canonical serine protease mechanism, in which the side chain hydroxyl group of the serine supplies its oxygen atom to form the C-terminus of the beta chain, while the remainder of the serine residue undergoes an oxidative deamination to produce ammonia and the pyruvoyl prosthetic group on the alpha chain. During this reaction, the Ser that is part of the protease active site of the proenzyme becomes the pyruvoyl prosthetic group, which constitutes an essential element of the active site of the mature decarboxylase.</text>
</comment>
<comment type="similarity">
    <text evidence="1">Belongs to the phosphatidylserine decarboxylase family. PSD-B subfamily. Prokaryotic type I sub-subfamily.</text>
</comment>
<name>PSD_PSEAE</name>
<protein>
    <recommendedName>
        <fullName evidence="1">Phosphatidylserine decarboxylase proenzyme</fullName>
        <ecNumber evidence="1">4.1.1.65</ecNumber>
    </recommendedName>
    <component>
        <recommendedName>
            <fullName evidence="1">Phosphatidylserine decarboxylase alpha chain</fullName>
        </recommendedName>
    </component>
    <component>
        <recommendedName>
            <fullName evidence="1">Phosphatidylserine decarboxylase beta chain</fullName>
        </recommendedName>
    </component>
</protein>
<gene>
    <name evidence="1" type="primary">psd</name>
    <name type="ordered locus">PA4957</name>
</gene>
<sequence>MSFKDRLFICSQYLLPHHLLSRLIGFAADCRATWFKDRLIAWFARRYQVDMREAQVEDLQAFEHFNAFFTRALKDGARPLAQEPGAVLCPADGAISQLGPIEHGRIFQAKGHSYSLAELLGGDAELAAPFMGGDFATVYLSPRDYHRVHMPLAGTLREMVYVPGRLFSVNQTTAENVPELFARNERVVCLFDTERGPMAVVLVGAMIVASIETVWAGLVTPPKRELKTFRYDEAARAPIRLEKGAELGRFKLGSTAIVLFGPQQVAFNDGLGAASPVRMGECLALPKQS</sequence>
<reference key="1">
    <citation type="journal article" date="2000" name="Nature">
        <title>Complete genome sequence of Pseudomonas aeruginosa PAO1, an opportunistic pathogen.</title>
        <authorList>
            <person name="Stover C.K."/>
            <person name="Pham X.-Q.T."/>
            <person name="Erwin A.L."/>
            <person name="Mizoguchi S.D."/>
            <person name="Warrener P."/>
            <person name="Hickey M.J."/>
            <person name="Brinkman F.S.L."/>
            <person name="Hufnagle W.O."/>
            <person name="Kowalik D.J."/>
            <person name="Lagrou M."/>
            <person name="Garber R.L."/>
            <person name="Goltry L."/>
            <person name="Tolentino E."/>
            <person name="Westbrock-Wadman S."/>
            <person name="Yuan Y."/>
            <person name="Brody L.L."/>
            <person name="Coulter S.N."/>
            <person name="Folger K.R."/>
            <person name="Kas A."/>
            <person name="Larbig K."/>
            <person name="Lim R.M."/>
            <person name="Smith K.A."/>
            <person name="Spencer D.H."/>
            <person name="Wong G.K.-S."/>
            <person name="Wu Z."/>
            <person name="Paulsen I.T."/>
            <person name="Reizer J."/>
            <person name="Saier M.H. Jr."/>
            <person name="Hancock R.E.W."/>
            <person name="Lory S."/>
            <person name="Olson M.V."/>
        </authorList>
    </citation>
    <scope>NUCLEOTIDE SEQUENCE [LARGE SCALE GENOMIC DNA]</scope>
    <source>
        <strain>ATCC 15692 / DSM 22644 / CIP 104116 / JCM 14847 / LMG 12228 / 1C / PRS 101 / PAO1</strain>
    </source>
</reference>
<organism>
    <name type="scientific">Pseudomonas aeruginosa (strain ATCC 15692 / DSM 22644 / CIP 104116 / JCM 14847 / LMG 12228 / 1C / PRS 101 / PAO1)</name>
    <dbReference type="NCBI Taxonomy" id="208964"/>
    <lineage>
        <taxon>Bacteria</taxon>
        <taxon>Pseudomonadati</taxon>
        <taxon>Pseudomonadota</taxon>
        <taxon>Gammaproteobacteria</taxon>
        <taxon>Pseudomonadales</taxon>
        <taxon>Pseudomonadaceae</taxon>
        <taxon>Pseudomonas</taxon>
    </lineage>
</organism>
<accession>Q9HUK8</accession>